<sequence>MIQQQTRLKVADNSGAKEIMCIRVLGGSHRKWGNIGDVIVASVKSATPGGVVKKGEVVKAVIVRSVKGLRRADGSYIKFDENAAVIIKDDKNPKGTRIFGPVARELRDKEFNKILSLAPEVL</sequence>
<evidence type="ECO:0000255" key="1">
    <source>
        <dbReference type="HAMAP-Rule" id="MF_01367"/>
    </source>
</evidence>
<evidence type="ECO:0000305" key="2"/>
<reference key="1">
    <citation type="journal article" date="2007" name="PLoS ONE">
        <title>Analysis of the neurotoxin complex genes in Clostridium botulinum A1-A4 and B1 strains: BoNT/A3, /Ba4 and /B1 clusters are located within plasmids.</title>
        <authorList>
            <person name="Smith T.J."/>
            <person name="Hill K.K."/>
            <person name="Foley B.T."/>
            <person name="Detter J.C."/>
            <person name="Munk A.C."/>
            <person name="Bruce D.C."/>
            <person name="Doggett N.A."/>
            <person name="Smith L.A."/>
            <person name="Marks J.D."/>
            <person name="Xie G."/>
            <person name="Brettin T.S."/>
        </authorList>
    </citation>
    <scope>NUCLEOTIDE SEQUENCE [LARGE SCALE GENOMIC DNA]</scope>
    <source>
        <strain>Loch Maree / Type A3</strain>
    </source>
</reference>
<name>RL14_CLOBM</name>
<keyword id="KW-0687">Ribonucleoprotein</keyword>
<keyword id="KW-0689">Ribosomal protein</keyword>
<keyword id="KW-0694">RNA-binding</keyword>
<keyword id="KW-0699">rRNA-binding</keyword>
<comment type="function">
    <text evidence="1">Binds to 23S rRNA. Forms part of two intersubunit bridges in the 70S ribosome.</text>
</comment>
<comment type="subunit">
    <text evidence="1">Part of the 50S ribosomal subunit. Forms a cluster with proteins L3 and L19. In the 70S ribosome, L14 and L19 interact and together make contacts with the 16S rRNA in bridges B5 and B8.</text>
</comment>
<comment type="similarity">
    <text evidence="1">Belongs to the universal ribosomal protein uL14 family.</text>
</comment>
<dbReference type="EMBL" id="CP000962">
    <property type="protein sequence ID" value="ACA55351.1"/>
    <property type="molecule type" value="Genomic_DNA"/>
</dbReference>
<dbReference type="RefSeq" id="WP_003357295.1">
    <property type="nucleotide sequence ID" value="NC_010520.1"/>
</dbReference>
<dbReference type="SMR" id="B1KSL5"/>
<dbReference type="GeneID" id="92940240"/>
<dbReference type="KEGG" id="cbl:CLK_2914"/>
<dbReference type="HOGENOM" id="CLU_095071_2_1_9"/>
<dbReference type="GO" id="GO:0022625">
    <property type="term" value="C:cytosolic large ribosomal subunit"/>
    <property type="evidence" value="ECO:0007669"/>
    <property type="project" value="TreeGrafter"/>
</dbReference>
<dbReference type="GO" id="GO:0070180">
    <property type="term" value="F:large ribosomal subunit rRNA binding"/>
    <property type="evidence" value="ECO:0007669"/>
    <property type="project" value="TreeGrafter"/>
</dbReference>
<dbReference type="GO" id="GO:0003735">
    <property type="term" value="F:structural constituent of ribosome"/>
    <property type="evidence" value="ECO:0007669"/>
    <property type="project" value="InterPro"/>
</dbReference>
<dbReference type="GO" id="GO:0006412">
    <property type="term" value="P:translation"/>
    <property type="evidence" value="ECO:0007669"/>
    <property type="project" value="UniProtKB-UniRule"/>
</dbReference>
<dbReference type="CDD" id="cd00337">
    <property type="entry name" value="Ribosomal_uL14"/>
    <property type="match status" value="1"/>
</dbReference>
<dbReference type="FunFam" id="2.40.150.20:FF:000001">
    <property type="entry name" value="50S ribosomal protein L14"/>
    <property type="match status" value="1"/>
</dbReference>
<dbReference type="Gene3D" id="2.40.150.20">
    <property type="entry name" value="Ribosomal protein L14"/>
    <property type="match status" value="1"/>
</dbReference>
<dbReference type="HAMAP" id="MF_01367">
    <property type="entry name" value="Ribosomal_uL14"/>
    <property type="match status" value="1"/>
</dbReference>
<dbReference type="InterPro" id="IPR000218">
    <property type="entry name" value="Ribosomal_uL14"/>
</dbReference>
<dbReference type="InterPro" id="IPR005745">
    <property type="entry name" value="Ribosomal_uL14_bac-type"/>
</dbReference>
<dbReference type="InterPro" id="IPR019972">
    <property type="entry name" value="Ribosomal_uL14_CS"/>
</dbReference>
<dbReference type="InterPro" id="IPR036853">
    <property type="entry name" value="Ribosomal_uL14_sf"/>
</dbReference>
<dbReference type="NCBIfam" id="TIGR01067">
    <property type="entry name" value="rplN_bact"/>
    <property type="match status" value="1"/>
</dbReference>
<dbReference type="PANTHER" id="PTHR11761">
    <property type="entry name" value="50S/60S RIBOSOMAL PROTEIN L14/L23"/>
    <property type="match status" value="1"/>
</dbReference>
<dbReference type="PANTHER" id="PTHR11761:SF3">
    <property type="entry name" value="LARGE RIBOSOMAL SUBUNIT PROTEIN UL14M"/>
    <property type="match status" value="1"/>
</dbReference>
<dbReference type="Pfam" id="PF00238">
    <property type="entry name" value="Ribosomal_L14"/>
    <property type="match status" value="1"/>
</dbReference>
<dbReference type="SMART" id="SM01374">
    <property type="entry name" value="Ribosomal_L14"/>
    <property type="match status" value="1"/>
</dbReference>
<dbReference type="SUPFAM" id="SSF50193">
    <property type="entry name" value="Ribosomal protein L14"/>
    <property type="match status" value="1"/>
</dbReference>
<dbReference type="PROSITE" id="PS00049">
    <property type="entry name" value="RIBOSOMAL_L14"/>
    <property type="match status" value="1"/>
</dbReference>
<feature type="chain" id="PRO_1000144247" description="Large ribosomal subunit protein uL14">
    <location>
        <begin position="1"/>
        <end position="122"/>
    </location>
</feature>
<accession>B1KSL5</accession>
<proteinExistence type="inferred from homology"/>
<gene>
    <name evidence="1" type="primary">rplN</name>
    <name type="ordered locus">CLK_2914</name>
</gene>
<protein>
    <recommendedName>
        <fullName evidence="1">Large ribosomal subunit protein uL14</fullName>
    </recommendedName>
    <alternativeName>
        <fullName evidence="2">50S ribosomal protein L14</fullName>
    </alternativeName>
</protein>
<organism>
    <name type="scientific">Clostridium botulinum (strain Loch Maree / Type A3)</name>
    <dbReference type="NCBI Taxonomy" id="498214"/>
    <lineage>
        <taxon>Bacteria</taxon>
        <taxon>Bacillati</taxon>
        <taxon>Bacillota</taxon>
        <taxon>Clostridia</taxon>
        <taxon>Eubacteriales</taxon>
        <taxon>Clostridiaceae</taxon>
        <taxon>Clostridium</taxon>
    </lineage>
</organism>